<reference key="1">
    <citation type="journal article" date="2008" name="Chem. Biol. Interact.">
        <title>Extending the Bacillus cereus group genomics to putative food-borne pathogens of different toxicity.</title>
        <authorList>
            <person name="Lapidus A."/>
            <person name="Goltsman E."/>
            <person name="Auger S."/>
            <person name="Galleron N."/>
            <person name="Segurens B."/>
            <person name="Dossat C."/>
            <person name="Land M.L."/>
            <person name="Broussolle V."/>
            <person name="Brillard J."/>
            <person name="Guinebretiere M.-H."/>
            <person name="Sanchis V."/>
            <person name="Nguen-the C."/>
            <person name="Lereclus D."/>
            <person name="Richardson P."/>
            <person name="Wincker P."/>
            <person name="Weissenbach J."/>
            <person name="Ehrlich S.D."/>
            <person name="Sorokin A."/>
        </authorList>
    </citation>
    <scope>NUCLEOTIDE SEQUENCE [LARGE SCALE GENOMIC DNA]</scope>
    <source>
        <strain>KBAB4</strain>
    </source>
</reference>
<feature type="chain" id="PRO_1000139888" description="HPr kinase/phosphorylase">
    <location>
        <begin position="1"/>
        <end position="309"/>
    </location>
</feature>
<feature type="region of interest" description="Important for the catalytic mechanism of both phosphorylation and dephosphorylation" evidence="1">
    <location>
        <begin position="201"/>
        <end position="210"/>
    </location>
</feature>
<feature type="region of interest" description="Important for the catalytic mechanism of dephosphorylation" evidence="1">
    <location>
        <begin position="264"/>
        <end position="269"/>
    </location>
</feature>
<feature type="active site" evidence="1">
    <location>
        <position position="138"/>
    </location>
</feature>
<feature type="active site" evidence="1">
    <location>
        <position position="159"/>
    </location>
</feature>
<feature type="active site" description="Proton acceptor; for phosphorylation activity. Proton donor; for dephosphorylation activity" evidence="1">
    <location>
        <position position="177"/>
    </location>
</feature>
<feature type="active site" evidence="1">
    <location>
        <position position="243"/>
    </location>
</feature>
<feature type="binding site" evidence="1">
    <location>
        <begin position="153"/>
        <end position="160"/>
    </location>
    <ligand>
        <name>ATP</name>
        <dbReference type="ChEBI" id="CHEBI:30616"/>
    </ligand>
</feature>
<feature type="binding site" evidence="1">
    <location>
        <position position="160"/>
    </location>
    <ligand>
        <name>Mg(2+)</name>
        <dbReference type="ChEBI" id="CHEBI:18420"/>
    </ligand>
</feature>
<feature type="binding site" evidence="1">
    <location>
        <position position="202"/>
    </location>
    <ligand>
        <name>Mg(2+)</name>
        <dbReference type="ChEBI" id="CHEBI:18420"/>
    </ligand>
</feature>
<organism>
    <name type="scientific">Bacillus mycoides (strain KBAB4)</name>
    <name type="common">Bacillus weihenstephanensis</name>
    <dbReference type="NCBI Taxonomy" id="315730"/>
    <lineage>
        <taxon>Bacteria</taxon>
        <taxon>Bacillati</taxon>
        <taxon>Bacillota</taxon>
        <taxon>Bacilli</taxon>
        <taxon>Bacillales</taxon>
        <taxon>Bacillaceae</taxon>
        <taxon>Bacillus</taxon>
        <taxon>Bacillus cereus group</taxon>
    </lineage>
</organism>
<gene>
    <name evidence="1" type="primary">hprK</name>
    <name type="ordered locus">BcerKBAB4_4956</name>
</gene>
<evidence type="ECO:0000255" key="1">
    <source>
        <dbReference type="HAMAP-Rule" id="MF_01249"/>
    </source>
</evidence>
<name>HPRK_BACMK</name>
<dbReference type="EC" id="2.7.11.-" evidence="1"/>
<dbReference type="EC" id="2.7.4.-" evidence="1"/>
<dbReference type="EMBL" id="CP000903">
    <property type="protein sequence ID" value="ABY46104.1"/>
    <property type="molecule type" value="Genomic_DNA"/>
</dbReference>
<dbReference type="RefSeq" id="WP_002016091.1">
    <property type="nucleotide sequence ID" value="NZ_CAKMRX030000110.1"/>
</dbReference>
<dbReference type="SMR" id="A9VQ77"/>
<dbReference type="GeneID" id="66265306"/>
<dbReference type="KEGG" id="bwe:BcerKBAB4_4956"/>
<dbReference type="eggNOG" id="COG1493">
    <property type="taxonomic scope" value="Bacteria"/>
</dbReference>
<dbReference type="HOGENOM" id="CLU_052030_0_1_9"/>
<dbReference type="Proteomes" id="UP000002154">
    <property type="component" value="Chromosome"/>
</dbReference>
<dbReference type="GO" id="GO:0005524">
    <property type="term" value="F:ATP binding"/>
    <property type="evidence" value="ECO:0007669"/>
    <property type="project" value="UniProtKB-UniRule"/>
</dbReference>
<dbReference type="GO" id="GO:0000287">
    <property type="term" value="F:magnesium ion binding"/>
    <property type="evidence" value="ECO:0007669"/>
    <property type="project" value="UniProtKB-UniRule"/>
</dbReference>
<dbReference type="GO" id="GO:0000155">
    <property type="term" value="F:phosphorelay sensor kinase activity"/>
    <property type="evidence" value="ECO:0007669"/>
    <property type="project" value="InterPro"/>
</dbReference>
<dbReference type="GO" id="GO:0004674">
    <property type="term" value="F:protein serine/threonine kinase activity"/>
    <property type="evidence" value="ECO:0007669"/>
    <property type="project" value="UniProtKB-KW"/>
</dbReference>
<dbReference type="GO" id="GO:0004712">
    <property type="term" value="F:protein serine/threonine/tyrosine kinase activity"/>
    <property type="evidence" value="ECO:0007669"/>
    <property type="project" value="UniProtKB-UniRule"/>
</dbReference>
<dbReference type="GO" id="GO:0006109">
    <property type="term" value="P:regulation of carbohydrate metabolic process"/>
    <property type="evidence" value="ECO:0007669"/>
    <property type="project" value="UniProtKB-UniRule"/>
</dbReference>
<dbReference type="CDD" id="cd01918">
    <property type="entry name" value="HprK_C"/>
    <property type="match status" value="1"/>
</dbReference>
<dbReference type="FunFam" id="3.40.1390.20:FF:000002">
    <property type="entry name" value="HPr kinase/phosphorylase"/>
    <property type="match status" value="1"/>
</dbReference>
<dbReference type="FunFam" id="3.40.50.300:FF:000174">
    <property type="entry name" value="HPr kinase/phosphorylase"/>
    <property type="match status" value="1"/>
</dbReference>
<dbReference type="Gene3D" id="3.40.1390.20">
    <property type="entry name" value="HprK N-terminal domain-like"/>
    <property type="match status" value="1"/>
</dbReference>
<dbReference type="Gene3D" id="3.40.50.300">
    <property type="entry name" value="P-loop containing nucleotide triphosphate hydrolases"/>
    <property type="match status" value="1"/>
</dbReference>
<dbReference type="HAMAP" id="MF_01249">
    <property type="entry name" value="HPr_kinase"/>
    <property type="match status" value="1"/>
</dbReference>
<dbReference type="InterPro" id="IPR003755">
    <property type="entry name" value="HPr(Ser)_kin/Pase"/>
</dbReference>
<dbReference type="InterPro" id="IPR011104">
    <property type="entry name" value="Hpr_kin/Pase_C"/>
</dbReference>
<dbReference type="InterPro" id="IPR011126">
    <property type="entry name" value="Hpr_kin/Pase_Hpr_N"/>
</dbReference>
<dbReference type="InterPro" id="IPR027417">
    <property type="entry name" value="P-loop_NTPase"/>
</dbReference>
<dbReference type="InterPro" id="IPR028979">
    <property type="entry name" value="Ser_kin/Pase_Hpr-like_N_sf"/>
</dbReference>
<dbReference type="NCBIfam" id="TIGR00679">
    <property type="entry name" value="hpr-ser"/>
    <property type="match status" value="1"/>
</dbReference>
<dbReference type="PANTHER" id="PTHR30305:SF1">
    <property type="entry name" value="HPR KINASE_PHOSPHORYLASE"/>
    <property type="match status" value="1"/>
</dbReference>
<dbReference type="PANTHER" id="PTHR30305">
    <property type="entry name" value="PROTEIN YJDM-RELATED"/>
    <property type="match status" value="1"/>
</dbReference>
<dbReference type="Pfam" id="PF07475">
    <property type="entry name" value="Hpr_kinase_C"/>
    <property type="match status" value="1"/>
</dbReference>
<dbReference type="Pfam" id="PF02603">
    <property type="entry name" value="Hpr_kinase_N"/>
    <property type="match status" value="1"/>
</dbReference>
<dbReference type="SUPFAM" id="SSF75138">
    <property type="entry name" value="HprK N-terminal domain-like"/>
    <property type="match status" value="1"/>
</dbReference>
<dbReference type="SUPFAM" id="SSF53795">
    <property type="entry name" value="PEP carboxykinase-like"/>
    <property type="match status" value="1"/>
</dbReference>
<sequence length="309" mass="34523">MPKVRTKDLIEQFQLELVSGEEGIHRPIDTSDLSRPGIEMAGFFTYYPADRVQLLGKTELTFFDTLTTEQKQERMKALCTEETPCIIVTRNQDVPDELLQASRESGVPLLRSAQTTTRLSSRLTNYLEGKLAPTTAVHGVLVDIYGVGVLITGQSGVGKSETALELVKRGHRLVADDSVEIRQEDEDTLVGSSPDLIEHLLEIRGLGIINVMTLFGAGAVRNYKRITLVINLEIWDQKKNYDRLGLDEEKMKIIDTELTKITLPVRPGRNLAVIIEVAAMNFRLKRMGVNAAQQFSERLMSAIELGNQE</sequence>
<protein>
    <recommendedName>
        <fullName evidence="1">HPr kinase/phosphorylase</fullName>
        <shortName evidence="1">HPrK/P</shortName>
        <ecNumber evidence="1">2.7.11.-</ecNumber>
        <ecNumber evidence="1">2.7.4.-</ecNumber>
    </recommendedName>
    <alternativeName>
        <fullName evidence="1">HPr(Ser) kinase/phosphorylase</fullName>
    </alternativeName>
</protein>
<keyword id="KW-0067">ATP-binding</keyword>
<keyword id="KW-0119">Carbohydrate metabolism</keyword>
<keyword id="KW-0418">Kinase</keyword>
<keyword id="KW-0460">Magnesium</keyword>
<keyword id="KW-0479">Metal-binding</keyword>
<keyword id="KW-0511">Multifunctional enzyme</keyword>
<keyword id="KW-0547">Nucleotide-binding</keyword>
<keyword id="KW-0723">Serine/threonine-protein kinase</keyword>
<keyword id="KW-0808">Transferase</keyword>
<proteinExistence type="inferred from homology"/>
<accession>A9VQ77</accession>
<comment type="function">
    <text evidence="1">Catalyzes the ATP- as well as the pyrophosphate-dependent phosphorylation of a specific serine residue in HPr, a phosphocarrier protein of the phosphoenolpyruvate-dependent sugar phosphotransferase system (PTS). HprK/P also catalyzes the pyrophosphate-producing, inorganic phosphate-dependent dephosphorylation (phosphorolysis) of seryl-phosphorylated HPr (P-Ser-HPr). The two antagonistic activities of HprK/P are regulated by several intracellular metabolites, which change their concentration in response to the absence or presence of rapidly metabolisable carbon sources (glucose, fructose, etc.) in the growth medium. Also phosphorylates/dephosphorylates the HPr-like catabolite repression protein crh on a specific serine residue. Therefore, by controlling the phosphorylation state of HPr and crh, HPrK/P is a sensor enzyme that plays a major role in the regulation of carbon metabolism and sugar transport: it mediates carbon catabolite repression (CCR), and regulates PTS-catalyzed carbohydrate uptake and inducer exclusion.</text>
</comment>
<comment type="catalytic activity">
    <reaction evidence="1">
        <text>[HPr protein]-L-serine + ATP = [HPr protein]-O-phospho-L-serine + ADP + H(+)</text>
        <dbReference type="Rhea" id="RHEA:46600"/>
        <dbReference type="Rhea" id="RHEA-COMP:11602"/>
        <dbReference type="Rhea" id="RHEA-COMP:11603"/>
        <dbReference type="ChEBI" id="CHEBI:15378"/>
        <dbReference type="ChEBI" id="CHEBI:29999"/>
        <dbReference type="ChEBI" id="CHEBI:30616"/>
        <dbReference type="ChEBI" id="CHEBI:83421"/>
        <dbReference type="ChEBI" id="CHEBI:456216"/>
    </reaction>
</comment>
<comment type="catalytic activity">
    <reaction evidence="1">
        <text>[HPr protein]-O-phospho-L-serine + phosphate + H(+) = [HPr protein]-L-serine + diphosphate</text>
        <dbReference type="Rhea" id="RHEA:46604"/>
        <dbReference type="Rhea" id="RHEA-COMP:11602"/>
        <dbReference type="Rhea" id="RHEA-COMP:11603"/>
        <dbReference type="ChEBI" id="CHEBI:15378"/>
        <dbReference type="ChEBI" id="CHEBI:29999"/>
        <dbReference type="ChEBI" id="CHEBI:33019"/>
        <dbReference type="ChEBI" id="CHEBI:43474"/>
        <dbReference type="ChEBI" id="CHEBI:83421"/>
    </reaction>
</comment>
<comment type="cofactor">
    <cofactor evidence="1">
        <name>Mg(2+)</name>
        <dbReference type="ChEBI" id="CHEBI:18420"/>
    </cofactor>
</comment>
<comment type="subunit">
    <text evidence="1">Homohexamer.</text>
</comment>
<comment type="domain">
    <text evidence="1">The Walker A ATP-binding motif also binds Pi and PPi.</text>
</comment>
<comment type="miscellaneous">
    <text evidence="1">Both phosphorylation and phosphorolysis are carried out by the same active site and suggest a common mechanism for both reactions.</text>
</comment>
<comment type="similarity">
    <text evidence="1">Belongs to the HPrK/P family.</text>
</comment>